<accession>B6JCI0</accession>
<accession>F8BRE5</accession>
<proteinExistence type="inferred from homology"/>
<evidence type="ECO:0000255" key="1">
    <source>
        <dbReference type="HAMAP-Rule" id="MF_00081"/>
    </source>
</evidence>
<organism>
    <name type="scientific">Afipia carboxidovorans (strain ATCC 49405 / DSM 1227 / KCTC 32145 / OM5)</name>
    <name type="common">Oligotropha carboxidovorans</name>
    <dbReference type="NCBI Taxonomy" id="504832"/>
    <lineage>
        <taxon>Bacteria</taxon>
        <taxon>Pseudomonadati</taxon>
        <taxon>Pseudomonadota</taxon>
        <taxon>Alphaproteobacteria</taxon>
        <taxon>Hyphomicrobiales</taxon>
        <taxon>Nitrobacteraceae</taxon>
        <taxon>Afipia</taxon>
    </lineage>
</organism>
<gene>
    <name evidence="1" type="primary">hrcA</name>
    <name type="ordered locus">OCAR_4414</name>
    <name type="ordered locus">OCA5_c01170</name>
</gene>
<dbReference type="EMBL" id="CP001196">
    <property type="protein sequence ID" value="ACI91560.1"/>
    <property type="molecule type" value="Genomic_DNA"/>
</dbReference>
<dbReference type="EMBL" id="CP002826">
    <property type="protein sequence ID" value="AEI04849.1"/>
    <property type="molecule type" value="Genomic_DNA"/>
</dbReference>
<dbReference type="RefSeq" id="WP_012561591.1">
    <property type="nucleotide sequence ID" value="NC_015684.1"/>
</dbReference>
<dbReference type="SMR" id="B6JCI0"/>
<dbReference type="STRING" id="504832.OCA5_c01170"/>
<dbReference type="KEGG" id="oca:OCAR_4414"/>
<dbReference type="KEGG" id="ocg:OCA5_c01170"/>
<dbReference type="PATRIC" id="fig|504832.7.peg.124"/>
<dbReference type="eggNOG" id="COG1420">
    <property type="taxonomic scope" value="Bacteria"/>
</dbReference>
<dbReference type="HOGENOM" id="CLU_050019_0_0_5"/>
<dbReference type="OrthoDB" id="9783139at2"/>
<dbReference type="Proteomes" id="UP000007730">
    <property type="component" value="Chromosome"/>
</dbReference>
<dbReference type="GO" id="GO:0003677">
    <property type="term" value="F:DNA binding"/>
    <property type="evidence" value="ECO:0007669"/>
    <property type="project" value="InterPro"/>
</dbReference>
<dbReference type="GO" id="GO:0045892">
    <property type="term" value="P:negative regulation of DNA-templated transcription"/>
    <property type="evidence" value="ECO:0007669"/>
    <property type="project" value="UniProtKB-UniRule"/>
</dbReference>
<dbReference type="Gene3D" id="3.30.450.40">
    <property type="match status" value="1"/>
</dbReference>
<dbReference type="Gene3D" id="3.30.390.60">
    <property type="entry name" value="Heat-inducible transcription repressor hrca homolog, domain 3"/>
    <property type="match status" value="1"/>
</dbReference>
<dbReference type="Gene3D" id="1.10.10.10">
    <property type="entry name" value="Winged helix-like DNA-binding domain superfamily/Winged helix DNA-binding domain"/>
    <property type="match status" value="1"/>
</dbReference>
<dbReference type="HAMAP" id="MF_00081">
    <property type="entry name" value="HrcA"/>
    <property type="match status" value="1"/>
</dbReference>
<dbReference type="InterPro" id="IPR029016">
    <property type="entry name" value="GAF-like_dom_sf"/>
</dbReference>
<dbReference type="InterPro" id="IPR002571">
    <property type="entry name" value="HrcA"/>
</dbReference>
<dbReference type="InterPro" id="IPR021153">
    <property type="entry name" value="HrcA_C"/>
</dbReference>
<dbReference type="InterPro" id="IPR036388">
    <property type="entry name" value="WH-like_DNA-bd_sf"/>
</dbReference>
<dbReference type="InterPro" id="IPR036390">
    <property type="entry name" value="WH_DNA-bd_sf"/>
</dbReference>
<dbReference type="InterPro" id="IPR023120">
    <property type="entry name" value="WHTH_transcript_rep_HrcA_IDD"/>
</dbReference>
<dbReference type="NCBIfam" id="TIGR00331">
    <property type="entry name" value="hrcA"/>
    <property type="match status" value="1"/>
</dbReference>
<dbReference type="PANTHER" id="PTHR34824">
    <property type="entry name" value="HEAT-INDUCIBLE TRANSCRIPTION REPRESSOR HRCA"/>
    <property type="match status" value="1"/>
</dbReference>
<dbReference type="PANTHER" id="PTHR34824:SF1">
    <property type="entry name" value="HEAT-INDUCIBLE TRANSCRIPTION REPRESSOR HRCA"/>
    <property type="match status" value="1"/>
</dbReference>
<dbReference type="Pfam" id="PF01628">
    <property type="entry name" value="HrcA"/>
    <property type="match status" value="1"/>
</dbReference>
<dbReference type="PIRSF" id="PIRSF005485">
    <property type="entry name" value="HrcA"/>
    <property type="match status" value="1"/>
</dbReference>
<dbReference type="SUPFAM" id="SSF55781">
    <property type="entry name" value="GAF domain-like"/>
    <property type="match status" value="1"/>
</dbReference>
<dbReference type="SUPFAM" id="SSF46785">
    <property type="entry name" value="Winged helix' DNA-binding domain"/>
    <property type="match status" value="1"/>
</dbReference>
<name>HRCA_AFIC5</name>
<feature type="chain" id="PRO_1000092824" description="Heat-inducible transcription repressor HrcA">
    <location>
        <begin position="1"/>
        <end position="363"/>
    </location>
</feature>
<keyword id="KW-1185">Reference proteome</keyword>
<keyword id="KW-0678">Repressor</keyword>
<keyword id="KW-0346">Stress response</keyword>
<keyword id="KW-0804">Transcription</keyword>
<keyword id="KW-0805">Transcription regulation</keyword>
<protein>
    <recommendedName>
        <fullName evidence="1">Heat-inducible transcription repressor HrcA</fullName>
    </recommendedName>
</protein>
<sequence>MSHHDPKEALITPGAALSQLNERSRDIFRQIVENYLATGEPVGSRNISRMISVPLSPASVRNVMADLEQLGLIYAPHTSAGRLPTELGLRFFVDALMQVGDLTEDERQSIQAQLAAIGKQQSIEATLSDAMMRLSGLTRAAAVVLTGKSNPRLKHIEFVRLEPEQALVVLVSEDGQIENRVLALPPGVPSSALIEASNFLNSRIRGRTLSEVRGELEAALAQRRSELDQLTQKIIAAGVASWSGGSSDERRLIVRGHANLLEDLHAMEDLERVRLLFDDLETKKGVADLLGLAEQGEGVRIFIGSENKLFSLSGSSTITAPYRDSSGRIVGVLGVIGPTRLNYARVIPMVDYAARIVSQMLGK</sequence>
<reference key="1">
    <citation type="journal article" date="2008" name="J. Bacteriol.">
        <title>Genome sequence of the chemolithoautotrophic bacterium Oligotropha carboxidovorans OM5T.</title>
        <authorList>
            <person name="Paul D."/>
            <person name="Bridges S."/>
            <person name="Burgess S.C."/>
            <person name="Dandass Y."/>
            <person name="Lawrence M.L."/>
        </authorList>
    </citation>
    <scope>NUCLEOTIDE SEQUENCE [LARGE SCALE GENOMIC DNA]</scope>
    <source>
        <strain>ATCC 49405 / DSM 1227 / KCTC 32145 / OM5</strain>
    </source>
</reference>
<reference key="2">
    <citation type="journal article" date="2011" name="J. Bacteriol.">
        <title>Complete genome sequences of the chemolithoautotrophic Oligotropha carboxidovorans strains OM4 and OM5.</title>
        <authorList>
            <person name="Volland S."/>
            <person name="Rachinger M."/>
            <person name="Strittmatter A."/>
            <person name="Daniel R."/>
            <person name="Gottschalk G."/>
            <person name="Meyer O."/>
        </authorList>
    </citation>
    <scope>NUCLEOTIDE SEQUENCE [LARGE SCALE GENOMIC DNA]</scope>
    <source>
        <strain>ATCC 49405 / DSM 1227 / KCTC 32145 / OM5</strain>
    </source>
</reference>
<comment type="function">
    <text evidence="1">Negative regulator of class I heat shock genes (grpE-dnaK-dnaJ and groELS operons). Prevents heat-shock induction of these operons.</text>
</comment>
<comment type="similarity">
    <text evidence="1">Belongs to the HrcA family.</text>
</comment>